<evidence type="ECO:0000255" key="1">
    <source>
        <dbReference type="HAMAP-Rule" id="MF_00600"/>
    </source>
</evidence>
<protein>
    <recommendedName>
        <fullName evidence="1">Chaperonin GroEL</fullName>
        <ecNumber evidence="1">5.6.1.7</ecNumber>
    </recommendedName>
    <alternativeName>
        <fullName evidence="1">60 kDa chaperonin</fullName>
    </alternativeName>
    <alternativeName>
        <fullName evidence="1">Chaperonin-60</fullName>
        <shortName evidence="1">Cpn60</shortName>
    </alternativeName>
</protein>
<reference key="1">
    <citation type="submission" date="2006-08" db="EMBL/GenBank/DDBJ databases">
        <title>Complete sequence of Alkalilimnicola ehrilichei MLHE-1.</title>
        <authorList>
            <person name="Copeland A."/>
            <person name="Lucas S."/>
            <person name="Lapidus A."/>
            <person name="Barry K."/>
            <person name="Detter J.C."/>
            <person name="Glavina del Rio T."/>
            <person name="Hammon N."/>
            <person name="Israni S."/>
            <person name="Dalin E."/>
            <person name="Tice H."/>
            <person name="Pitluck S."/>
            <person name="Sims D."/>
            <person name="Brettin T."/>
            <person name="Bruce D."/>
            <person name="Han C."/>
            <person name="Tapia R."/>
            <person name="Gilna P."/>
            <person name="Schmutz J."/>
            <person name="Larimer F."/>
            <person name="Land M."/>
            <person name="Hauser L."/>
            <person name="Kyrpides N."/>
            <person name="Mikhailova N."/>
            <person name="Oremland R.S."/>
            <person name="Hoeft S.E."/>
            <person name="Switzer-Blum J."/>
            <person name="Kulp T."/>
            <person name="King G."/>
            <person name="Tabita R."/>
            <person name="Witte B."/>
            <person name="Santini J.M."/>
            <person name="Basu P."/>
            <person name="Hollibaugh J.T."/>
            <person name="Xie G."/>
            <person name="Stolz J.F."/>
            <person name="Richardson P."/>
        </authorList>
    </citation>
    <scope>NUCLEOTIDE SEQUENCE [LARGE SCALE GENOMIC DNA]</scope>
    <source>
        <strain>ATCC BAA-1101 / DSM 17681 / MLHE-1</strain>
    </source>
</reference>
<feature type="chain" id="PRO_1000025750" description="Chaperonin GroEL">
    <location>
        <begin position="1"/>
        <end position="553"/>
    </location>
</feature>
<feature type="binding site" evidence="1">
    <location>
        <begin position="30"/>
        <end position="33"/>
    </location>
    <ligand>
        <name>ATP</name>
        <dbReference type="ChEBI" id="CHEBI:30616"/>
    </ligand>
</feature>
<feature type="binding site" evidence="1">
    <location>
        <position position="51"/>
    </location>
    <ligand>
        <name>ATP</name>
        <dbReference type="ChEBI" id="CHEBI:30616"/>
    </ligand>
</feature>
<feature type="binding site" evidence="1">
    <location>
        <begin position="87"/>
        <end position="91"/>
    </location>
    <ligand>
        <name>ATP</name>
        <dbReference type="ChEBI" id="CHEBI:30616"/>
    </ligand>
</feature>
<feature type="binding site" evidence="1">
    <location>
        <position position="416"/>
    </location>
    <ligand>
        <name>ATP</name>
        <dbReference type="ChEBI" id="CHEBI:30616"/>
    </ligand>
</feature>
<feature type="binding site" evidence="1">
    <location>
        <position position="496"/>
    </location>
    <ligand>
        <name>ATP</name>
        <dbReference type="ChEBI" id="CHEBI:30616"/>
    </ligand>
</feature>
<keyword id="KW-0067">ATP-binding</keyword>
<keyword id="KW-0143">Chaperone</keyword>
<keyword id="KW-0963">Cytoplasm</keyword>
<keyword id="KW-0413">Isomerase</keyword>
<keyword id="KW-0547">Nucleotide-binding</keyword>
<keyword id="KW-1185">Reference proteome</keyword>
<accession>Q0ACQ9</accession>
<gene>
    <name evidence="1" type="primary">groEL</name>
    <name evidence="1" type="synonym">groL</name>
    <name type="ordered locus">Mlg_0019</name>
</gene>
<sequence>MAAKEIRFSDDARQRMMKGVNTLANAVKATLGPRGRNAVLDKSFGAPTVTKDGVSVAKEIELEDKFENMGAQMLKEVSSQTSDIAGDGTTTATVLAQAILREGMKAVAAGMNPMDLKRGIDKGVSAATKYLADELSKPCETDTSIAQVGSISANSDESVGRIIADAMQKVGKEGVITVEEGSGLENELDVVEGMQFDRGYLSPYFINNQQSMKAELEDAFILLHDKKISNIRDLLPLLENVAKANKPLLIISEDIEGEALATLVVNSIRGIVKVAAVKAPGFGDRRKAMLQDIAVLTGGTVISEEVGLSLEKATLDDLGQAKKVDVSKEETTIVGGAGRHDDIMARVEQIRAQIEESTSEYDKEKLQERVAKLAGGVAVIKVGATSEIEMKEKKARVEDALHATRAAVEEGIVPGGGTALLRAQASLDGLEYANHDQEVGINIVRRAMEEPLRQIVYNAGGDGAVVVNEVRNGEGNYGYNAQSGEYGDLVEMGILDPTKVTRTALQNAASVAALMITTEVMVADLPKDDDAGAGGGMGDMGGMGGMGGMGGMM</sequence>
<organism>
    <name type="scientific">Alkalilimnicola ehrlichii (strain ATCC BAA-1101 / DSM 17681 / MLHE-1)</name>
    <dbReference type="NCBI Taxonomy" id="187272"/>
    <lineage>
        <taxon>Bacteria</taxon>
        <taxon>Pseudomonadati</taxon>
        <taxon>Pseudomonadota</taxon>
        <taxon>Gammaproteobacteria</taxon>
        <taxon>Chromatiales</taxon>
        <taxon>Ectothiorhodospiraceae</taxon>
        <taxon>Alkalilimnicola</taxon>
    </lineage>
</organism>
<name>CH60_ALKEH</name>
<proteinExistence type="inferred from homology"/>
<comment type="function">
    <text evidence="1">Together with its co-chaperonin GroES, plays an essential role in assisting protein folding. The GroEL-GroES system forms a nano-cage that allows encapsulation of the non-native substrate proteins and provides a physical environment optimized to promote and accelerate protein folding.</text>
</comment>
<comment type="catalytic activity">
    <reaction evidence="1">
        <text>ATP + H2O + a folded polypeptide = ADP + phosphate + an unfolded polypeptide.</text>
        <dbReference type="EC" id="5.6.1.7"/>
    </reaction>
</comment>
<comment type="subunit">
    <text evidence="1">Forms a cylinder of 14 subunits composed of two heptameric rings stacked back-to-back. Interacts with the co-chaperonin GroES.</text>
</comment>
<comment type="subcellular location">
    <subcellularLocation>
        <location evidence="1">Cytoplasm</location>
    </subcellularLocation>
</comment>
<comment type="similarity">
    <text evidence="1">Belongs to the chaperonin (HSP60) family.</text>
</comment>
<dbReference type="EC" id="5.6.1.7" evidence="1"/>
<dbReference type="EMBL" id="CP000453">
    <property type="protein sequence ID" value="ABI55378.1"/>
    <property type="molecule type" value="Genomic_DNA"/>
</dbReference>
<dbReference type="RefSeq" id="WP_011627774.1">
    <property type="nucleotide sequence ID" value="NC_008340.1"/>
</dbReference>
<dbReference type="SMR" id="Q0ACQ9"/>
<dbReference type="KEGG" id="aeh:Mlg_0019"/>
<dbReference type="eggNOG" id="COG0459">
    <property type="taxonomic scope" value="Bacteria"/>
</dbReference>
<dbReference type="HOGENOM" id="CLU_016503_3_0_6"/>
<dbReference type="OrthoDB" id="9766614at2"/>
<dbReference type="Proteomes" id="UP000001962">
    <property type="component" value="Chromosome"/>
</dbReference>
<dbReference type="GO" id="GO:0005737">
    <property type="term" value="C:cytoplasm"/>
    <property type="evidence" value="ECO:0007669"/>
    <property type="project" value="UniProtKB-SubCell"/>
</dbReference>
<dbReference type="GO" id="GO:0005524">
    <property type="term" value="F:ATP binding"/>
    <property type="evidence" value="ECO:0007669"/>
    <property type="project" value="UniProtKB-UniRule"/>
</dbReference>
<dbReference type="GO" id="GO:0140662">
    <property type="term" value="F:ATP-dependent protein folding chaperone"/>
    <property type="evidence" value="ECO:0007669"/>
    <property type="project" value="InterPro"/>
</dbReference>
<dbReference type="GO" id="GO:0016853">
    <property type="term" value="F:isomerase activity"/>
    <property type="evidence" value="ECO:0007669"/>
    <property type="project" value="UniProtKB-KW"/>
</dbReference>
<dbReference type="GO" id="GO:0051082">
    <property type="term" value="F:unfolded protein binding"/>
    <property type="evidence" value="ECO:0007669"/>
    <property type="project" value="UniProtKB-UniRule"/>
</dbReference>
<dbReference type="GO" id="GO:0042026">
    <property type="term" value="P:protein refolding"/>
    <property type="evidence" value="ECO:0007669"/>
    <property type="project" value="UniProtKB-UniRule"/>
</dbReference>
<dbReference type="CDD" id="cd03344">
    <property type="entry name" value="GroEL"/>
    <property type="match status" value="1"/>
</dbReference>
<dbReference type="FunFam" id="1.10.560.10:FF:000001">
    <property type="entry name" value="60 kDa chaperonin"/>
    <property type="match status" value="1"/>
</dbReference>
<dbReference type="FunFam" id="3.50.7.10:FF:000001">
    <property type="entry name" value="60 kDa chaperonin"/>
    <property type="match status" value="1"/>
</dbReference>
<dbReference type="Gene3D" id="3.50.7.10">
    <property type="entry name" value="GroEL"/>
    <property type="match status" value="1"/>
</dbReference>
<dbReference type="Gene3D" id="1.10.560.10">
    <property type="entry name" value="GroEL-like equatorial domain"/>
    <property type="match status" value="1"/>
</dbReference>
<dbReference type="Gene3D" id="3.30.260.10">
    <property type="entry name" value="TCP-1-like chaperonin intermediate domain"/>
    <property type="match status" value="1"/>
</dbReference>
<dbReference type="HAMAP" id="MF_00600">
    <property type="entry name" value="CH60"/>
    <property type="match status" value="1"/>
</dbReference>
<dbReference type="InterPro" id="IPR018370">
    <property type="entry name" value="Chaperonin_Cpn60_CS"/>
</dbReference>
<dbReference type="InterPro" id="IPR001844">
    <property type="entry name" value="Cpn60/GroEL"/>
</dbReference>
<dbReference type="InterPro" id="IPR002423">
    <property type="entry name" value="Cpn60/GroEL/TCP-1"/>
</dbReference>
<dbReference type="InterPro" id="IPR027409">
    <property type="entry name" value="GroEL-like_apical_dom_sf"/>
</dbReference>
<dbReference type="InterPro" id="IPR027413">
    <property type="entry name" value="GROEL-like_equatorial_sf"/>
</dbReference>
<dbReference type="InterPro" id="IPR027410">
    <property type="entry name" value="TCP-1-like_intermed_sf"/>
</dbReference>
<dbReference type="NCBIfam" id="TIGR02348">
    <property type="entry name" value="GroEL"/>
    <property type="match status" value="1"/>
</dbReference>
<dbReference type="NCBIfam" id="NF000592">
    <property type="entry name" value="PRK00013.1"/>
    <property type="match status" value="1"/>
</dbReference>
<dbReference type="NCBIfam" id="NF009487">
    <property type="entry name" value="PRK12849.1"/>
    <property type="match status" value="1"/>
</dbReference>
<dbReference type="NCBIfam" id="NF009488">
    <property type="entry name" value="PRK12850.1"/>
    <property type="match status" value="1"/>
</dbReference>
<dbReference type="NCBIfam" id="NF009489">
    <property type="entry name" value="PRK12851.1"/>
    <property type="match status" value="1"/>
</dbReference>
<dbReference type="PANTHER" id="PTHR45633">
    <property type="entry name" value="60 KDA HEAT SHOCK PROTEIN, MITOCHONDRIAL"/>
    <property type="match status" value="1"/>
</dbReference>
<dbReference type="Pfam" id="PF00118">
    <property type="entry name" value="Cpn60_TCP1"/>
    <property type="match status" value="1"/>
</dbReference>
<dbReference type="PRINTS" id="PR00298">
    <property type="entry name" value="CHAPERONIN60"/>
</dbReference>
<dbReference type="SUPFAM" id="SSF52029">
    <property type="entry name" value="GroEL apical domain-like"/>
    <property type="match status" value="1"/>
</dbReference>
<dbReference type="SUPFAM" id="SSF48592">
    <property type="entry name" value="GroEL equatorial domain-like"/>
    <property type="match status" value="1"/>
</dbReference>
<dbReference type="SUPFAM" id="SSF54849">
    <property type="entry name" value="GroEL-intermediate domain like"/>
    <property type="match status" value="1"/>
</dbReference>
<dbReference type="PROSITE" id="PS00296">
    <property type="entry name" value="CHAPERONINS_CPN60"/>
    <property type="match status" value="1"/>
</dbReference>